<evidence type="ECO:0000255" key="1">
    <source>
        <dbReference type="HAMAP-Rule" id="MF_00145"/>
    </source>
</evidence>
<keyword id="KW-0067">ATP-binding</keyword>
<keyword id="KW-0963">Cytoplasm</keyword>
<keyword id="KW-0324">Glycolysis</keyword>
<keyword id="KW-0418">Kinase</keyword>
<keyword id="KW-0547">Nucleotide-binding</keyword>
<keyword id="KW-0808">Transferase</keyword>
<dbReference type="EC" id="2.7.2.3" evidence="1"/>
<dbReference type="EMBL" id="AP011115">
    <property type="protein sequence ID" value="BAH55206.1"/>
    <property type="molecule type" value="Genomic_DNA"/>
</dbReference>
<dbReference type="RefSeq" id="WP_015890631.1">
    <property type="nucleotide sequence ID" value="NC_012522.1"/>
</dbReference>
<dbReference type="SMR" id="C1B4L7"/>
<dbReference type="STRING" id="632772.ROP_69590"/>
<dbReference type="KEGG" id="rop:ROP_69590"/>
<dbReference type="PATRIC" id="fig|632772.20.peg.7250"/>
<dbReference type="HOGENOM" id="CLU_025427_0_2_11"/>
<dbReference type="OrthoDB" id="9808460at2"/>
<dbReference type="UniPathway" id="UPA00109">
    <property type="reaction ID" value="UER00185"/>
</dbReference>
<dbReference type="Proteomes" id="UP000002212">
    <property type="component" value="Chromosome"/>
</dbReference>
<dbReference type="GO" id="GO:0005829">
    <property type="term" value="C:cytosol"/>
    <property type="evidence" value="ECO:0007669"/>
    <property type="project" value="TreeGrafter"/>
</dbReference>
<dbReference type="GO" id="GO:0043531">
    <property type="term" value="F:ADP binding"/>
    <property type="evidence" value="ECO:0007669"/>
    <property type="project" value="TreeGrafter"/>
</dbReference>
<dbReference type="GO" id="GO:0005524">
    <property type="term" value="F:ATP binding"/>
    <property type="evidence" value="ECO:0007669"/>
    <property type="project" value="UniProtKB-KW"/>
</dbReference>
<dbReference type="GO" id="GO:0004618">
    <property type="term" value="F:phosphoglycerate kinase activity"/>
    <property type="evidence" value="ECO:0007669"/>
    <property type="project" value="UniProtKB-UniRule"/>
</dbReference>
<dbReference type="GO" id="GO:0006094">
    <property type="term" value="P:gluconeogenesis"/>
    <property type="evidence" value="ECO:0007669"/>
    <property type="project" value="TreeGrafter"/>
</dbReference>
<dbReference type="GO" id="GO:0006096">
    <property type="term" value="P:glycolytic process"/>
    <property type="evidence" value="ECO:0007669"/>
    <property type="project" value="UniProtKB-UniRule"/>
</dbReference>
<dbReference type="CDD" id="cd00318">
    <property type="entry name" value="Phosphoglycerate_kinase"/>
    <property type="match status" value="1"/>
</dbReference>
<dbReference type="FunFam" id="3.40.50.1260:FF:000003">
    <property type="entry name" value="Phosphoglycerate kinase"/>
    <property type="match status" value="1"/>
</dbReference>
<dbReference type="FunFam" id="3.40.50.1260:FF:000006">
    <property type="entry name" value="Phosphoglycerate kinase"/>
    <property type="match status" value="1"/>
</dbReference>
<dbReference type="Gene3D" id="3.40.50.1260">
    <property type="entry name" value="Phosphoglycerate kinase, N-terminal domain"/>
    <property type="match status" value="2"/>
</dbReference>
<dbReference type="HAMAP" id="MF_00145">
    <property type="entry name" value="Phosphoglyc_kinase"/>
    <property type="match status" value="1"/>
</dbReference>
<dbReference type="InterPro" id="IPR001576">
    <property type="entry name" value="Phosphoglycerate_kinase"/>
</dbReference>
<dbReference type="InterPro" id="IPR015824">
    <property type="entry name" value="Phosphoglycerate_kinase_N"/>
</dbReference>
<dbReference type="InterPro" id="IPR036043">
    <property type="entry name" value="Phosphoglycerate_kinase_sf"/>
</dbReference>
<dbReference type="PANTHER" id="PTHR11406">
    <property type="entry name" value="PHOSPHOGLYCERATE KINASE"/>
    <property type="match status" value="1"/>
</dbReference>
<dbReference type="PANTHER" id="PTHR11406:SF23">
    <property type="entry name" value="PHOSPHOGLYCERATE KINASE 1, CHLOROPLASTIC-RELATED"/>
    <property type="match status" value="1"/>
</dbReference>
<dbReference type="Pfam" id="PF00162">
    <property type="entry name" value="PGK"/>
    <property type="match status" value="1"/>
</dbReference>
<dbReference type="PIRSF" id="PIRSF000724">
    <property type="entry name" value="Pgk"/>
    <property type="match status" value="1"/>
</dbReference>
<dbReference type="PRINTS" id="PR00477">
    <property type="entry name" value="PHGLYCKINASE"/>
</dbReference>
<dbReference type="SUPFAM" id="SSF53748">
    <property type="entry name" value="Phosphoglycerate kinase"/>
    <property type="match status" value="1"/>
</dbReference>
<proteinExistence type="inferred from homology"/>
<feature type="chain" id="PRO_1000192844" description="Phosphoglycerate kinase">
    <location>
        <begin position="1"/>
        <end position="403"/>
    </location>
</feature>
<feature type="binding site" evidence="1">
    <location>
        <begin position="24"/>
        <end position="26"/>
    </location>
    <ligand>
        <name>substrate</name>
    </ligand>
</feature>
<feature type="binding site" evidence="1">
    <location>
        <position position="39"/>
    </location>
    <ligand>
        <name>substrate</name>
    </ligand>
</feature>
<feature type="binding site" evidence="1">
    <location>
        <begin position="62"/>
        <end position="65"/>
    </location>
    <ligand>
        <name>substrate</name>
    </ligand>
</feature>
<feature type="binding site" evidence="1">
    <location>
        <position position="121"/>
    </location>
    <ligand>
        <name>substrate</name>
    </ligand>
</feature>
<feature type="binding site" evidence="1">
    <location>
        <position position="161"/>
    </location>
    <ligand>
        <name>substrate</name>
    </ligand>
</feature>
<feature type="binding site" evidence="1">
    <location>
        <position position="211"/>
    </location>
    <ligand>
        <name>ATP</name>
        <dbReference type="ChEBI" id="CHEBI:30616"/>
    </ligand>
</feature>
<feature type="binding site" evidence="1">
    <location>
        <position position="299"/>
    </location>
    <ligand>
        <name>ATP</name>
        <dbReference type="ChEBI" id="CHEBI:30616"/>
    </ligand>
</feature>
<feature type="binding site" evidence="1">
    <location>
        <position position="330"/>
    </location>
    <ligand>
        <name>ATP</name>
        <dbReference type="ChEBI" id="CHEBI:30616"/>
    </ligand>
</feature>
<feature type="binding site" evidence="1">
    <location>
        <begin position="359"/>
        <end position="362"/>
    </location>
    <ligand>
        <name>ATP</name>
        <dbReference type="ChEBI" id="CHEBI:30616"/>
    </ligand>
</feature>
<organism>
    <name type="scientific">Rhodococcus opacus (strain B4)</name>
    <dbReference type="NCBI Taxonomy" id="632772"/>
    <lineage>
        <taxon>Bacteria</taxon>
        <taxon>Bacillati</taxon>
        <taxon>Actinomycetota</taxon>
        <taxon>Actinomycetes</taxon>
        <taxon>Mycobacteriales</taxon>
        <taxon>Nocardiaceae</taxon>
        <taxon>Rhodococcus</taxon>
    </lineage>
</organism>
<comment type="catalytic activity">
    <reaction evidence="1">
        <text>(2R)-3-phosphoglycerate + ATP = (2R)-3-phospho-glyceroyl phosphate + ADP</text>
        <dbReference type="Rhea" id="RHEA:14801"/>
        <dbReference type="ChEBI" id="CHEBI:30616"/>
        <dbReference type="ChEBI" id="CHEBI:57604"/>
        <dbReference type="ChEBI" id="CHEBI:58272"/>
        <dbReference type="ChEBI" id="CHEBI:456216"/>
        <dbReference type="EC" id="2.7.2.3"/>
    </reaction>
</comment>
<comment type="pathway">
    <text evidence="1">Carbohydrate degradation; glycolysis; pyruvate from D-glyceraldehyde 3-phosphate: step 2/5.</text>
</comment>
<comment type="subunit">
    <text evidence="1">Monomer.</text>
</comment>
<comment type="subcellular location">
    <subcellularLocation>
        <location evidence="1">Cytoplasm</location>
    </subcellularLocation>
</comment>
<comment type="similarity">
    <text evidence="1">Belongs to the phosphoglycerate kinase family.</text>
</comment>
<reference key="1">
    <citation type="submission" date="2009-03" db="EMBL/GenBank/DDBJ databases">
        <title>Comparison of the complete genome sequences of Rhodococcus erythropolis PR4 and Rhodococcus opacus B4.</title>
        <authorList>
            <person name="Takarada H."/>
            <person name="Sekine M."/>
            <person name="Hosoyama A."/>
            <person name="Yamada R."/>
            <person name="Fujisawa T."/>
            <person name="Omata S."/>
            <person name="Shimizu A."/>
            <person name="Tsukatani N."/>
            <person name="Tanikawa S."/>
            <person name="Fujita N."/>
            <person name="Harayama S."/>
        </authorList>
    </citation>
    <scope>NUCLEOTIDE SEQUENCE [LARGE SCALE GENOMIC DNA]</scope>
    <source>
        <strain>B4</strain>
    </source>
</reference>
<sequence>MAVQTLDDLLNAGVEGRAVLVRSDLNVPLDGDRITDPGRIIASAPTLKALAEAGAKVIVTAHLGRPEGEPDPQYSLAPVAAKLAEVLGRNVQLAGDVVGQDALARAEGLTDGDVLLLENIRFDPRETSKDEAERTKLAKALVELVGDDGAFVSDGFGVVHRAQASVYEVAKLLPHYAGTLVDAEIKVLGKLTAEPERPYAVVLGGSKVSDKLAVIEALAPKVDTLVIGGGMYYTFLAAQGLSVGNSLCEESMIDTCKALLEQYADVIHIPQDVVIADSFSADAESKIVSVLEIPDGWMGLDIGPQSVRRFAAILTSAKTVFWNGPMGVFEFEKFAAGTKGVAEAIIEATGKGAYSVVGGGDSAAAVRQLGLPEDGFSHISTGGGASLEYLEGKELPGIAVLEG</sequence>
<gene>
    <name evidence="1" type="primary">pgk</name>
    <name type="ordered locus">ROP_69590</name>
</gene>
<name>PGK_RHOOB</name>
<accession>C1B4L7</accession>
<protein>
    <recommendedName>
        <fullName evidence="1">Phosphoglycerate kinase</fullName>
        <ecNumber evidence="1">2.7.2.3</ecNumber>
    </recommendedName>
</protein>